<feature type="chain" id="PRO_1000015582" description="33 kDa chaperonin">
    <location>
        <begin position="1"/>
        <end position="290"/>
    </location>
</feature>
<feature type="disulfide bond" description="Redox-active" evidence="1">
    <location>
        <begin position="235"/>
        <end position="237"/>
    </location>
</feature>
<feature type="disulfide bond" description="Redox-active" evidence="1">
    <location>
        <begin position="268"/>
        <end position="271"/>
    </location>
</feature>
<gene>
    <name evidence="1" type="primary">hslO</name>
    <name type="ordered locus">SpyM50102</name>
</gene>
<proteinExistence type="inferred from homology"/>
<comment type="function">
    <text evidence="1">Redox regulated molecular chaperone. Protects both thermally unfolding and oxidatively damaged proteins from irreversible aggregation. Plays an important role in the bacterial defense system toward oxidative stress.</text>
</comment>
<comment type="subcellular location">
    <subcellularLocation>
        <location evidence="1">Cytoplasm</location>
    </subcellularLocation>
</comment>
<comment type="PTM">
    <text evidence="1">Under oxidizing conditions two disulfide bonds are formed involving the reactive cysteines. Under reducing conditions zinc is bound to the reactive cysteines and the protein is inactive.</text>
</comment>
<comment type="similarity">
    <text evidence="1">Belongs to the HSP33 family.</text>
</comment>
<reference key="1">
    <citation type="journal article" date="2007" name="J. Bacteriol.">
        <title>Complete genome of acute rheumatic fever-associated serotype M5 Streptococcus pyogenes strain Manfredo.</title>
        <authorList>
            <person name="Holden M.T.G."/>
            <person name="Scott A."/>
            <person name="Cherevach I."/>
            <person name="Chillingworth T."/>
            <person name="Churcher C."/>
            <person name="Cronin A."/>
            <person name="Dowd L."/>
            <person name="Feltwell T."/>
            <person name="Hamlin N."/>
            <person name="Holroyd S."/>
            <person name="Jagels K."/>
            <person name="Moule S."/>
            <person name="Mungall K."/>
            <person name="Quail M.A."/>
            <person name="Price C."/>
            <person name="Rabbinowitsch E."/>
            <person name="Sharp S."/>
            <person name="Skelton J."/>
            <person name="Whitehead S."/>
            <person name="Barrell B.G."/>
            <person name="Kehoe M."/>
            <person name="Parkhill J."/>
        </authorList>
    </citation>
    <scope>NUCLEOTIDE SEQUENCE [LARGE SCALE GENOMIC DNA]</scope>
    <source>
        <strain>Manfredo</strain>
    </source>
</reference>
<keyword id="KW-0143">Chaperone</keyword>
<keyword id="KW-0963">Cytoplasm</keyword>
<keyword id="KW-1015">Disulfide bond</keyword>
<keyword id="KW-0676">Redox-active center</keyword>
<keyword id="KW-0346">Stress response</keyword>
<keyword id="KW-0862">Zinc</keyword>
<dbReference type="EMBL" id="AM295007">
    <property type="protein sequence ID" value="CAM29445.1"/>
    <property type="molecule type" value="Genomic_DNA"/>
</dbReference>
<dbReference type="RefSeq" id="WP_011888541.1">
    <property type="nucleotide sequence ID" value="NC_009332.1"/>
</dbReference>
<dbReference type="SMR" id="A2RC73"/>
<dbReference type="KEGG" id="spf:SpyM50102"/>
<dbReference type="HOGENOM" id="CLU_054493_1_0_9"/>
<dbReference type="GO" id="GO:0005737">
    <property type="term" value="C:cytoplasm"/>
    <property type="evidence" value="ECO:0007669"/>
    <property type="project" value="UniProtKB-SubCell"/>
</dbReference>
<dbReference type="GO" id="GO:0044183">
    <property type="term" value="F:protein folding chaperone"/>
    <property type="evidence" value="ECO:0007669"/>
    <property type="project" value="TreeGrafter"/>
</dbReference>
<dbReference type="GO" id="GO:0051082">
    <property type="term" value="F:unfolded protein binding"/>
    <property type="evidence" value="ECO:0007669"/>
    <property type="project" value="UniProtKB-UniRule"/>
</dbReference>
<dbReference type="GO" id="GO:0042026">
    <property type="term" value="P:protein refolding"/>
    <property type="evidence" value="ECO:0007669"/>
    <property type="project" value="TreeGrafter"/>
</dbReference>
<dbReference type="CDD" id="cd00498">
    <property type="entry name" value="Hsp33"/>
    <property type="match status" value="1"/>
</dbReference>
<dbReference type="Gene3D" id="3.55.30.10">
    <property type="entry name" value="Hsp33 domain"/>
    <property type="match status" value="1"/>
</dbReference>
<dbReference type="Gene3D" id="3.90.1280.10">
    <property type="entry name" value="HSP33 redox switch-like"/>
    <property type="match status" value="1"/>
</dbReference>
<dbReference type="HAMAP" id="MF_00117">
    <property type="entry name" value="HslO"/>
    <property type="match status" value="1"/>
</dbReference>
<dbReference type="InterPro" id="IPR000397">
    <property type="entry name" value="Heat_shock_Hsp33"/>
</dbReference>
<dbReference type="InterPro" id="IPR016154">
    <property type="entry name" value="Heat_shock_Hsp33_C"/>
</dbReference>
<dbReference type="InterPro" id="IPR016153">
    <property type="entry name" value="Heat_shock_Hsp33_N"/>
</dbReference>
<dbReference type="NCBIfam" id="NF001033">
    <property type="entry name" value="PRK00114.1"/>
    <property type="match status" value="1"/>
</dbReference>
<dbReference type="PANTHER" id="PTHR30111">
    <property type="entry name" value="33 KDA CHAPERONIN"/>
    <property type="match status" value="1"/>
</dbReference>
<dbReference type="PANTHER" id="PTHR30111:SF1">
    <property type="entry name" value="33 KDA CHAPERONIN"/>
    <property type="match status" value="1"/>
</dbReference>
<dbReference type="Pfam" id="PF01430">
    <property type="entry name" value="HSP33"/>
    <property type="match status" value="1"/>
</dbReference>
<dbReference type="PIRSF" id="PIRSF005261">
    <property type="entry name" value="Heat_shock_Hsp33"/>
    <property type="match status" value="1"/>
</dbReference>
<dbReference type="SUPFAM" id="SSF64397">
    <property type="entry name" value="Hsp33 domain"/>
    <property type="match status" value="1"/>
</dbReference>
<dbReference type="SUPFAM" id="SSF118352">
    <property type="entry name" value="HSP33 redox switch-like"/>
    <property type="match status" value="1"/>
</dbReference>
<accession>A2RC73</accession>
<organism>
    <name type="scientific">Streptococcus pyogenes serotype M5 (strain Manfredo)</name>
    <dbReference type="NCBI Taxonomy" id="160491"/>
    <lineage>
        <taxon>Bacteria</taxon>
        <taxon>Bacillati</taxon>
        <taxon>Bacillota</taxon>
        <taxon>Bacilli</taxon>
        <taxon>Lactobacillales</taxon>
        <taxon>Streptococcaceae</taxon>
        <taxon>Streptococcus</taxon>
    </lineage>
</organism>
<name>HSLO_STRPG</name>
<sequence>MDKIIKSIAQSGAFRAYVLDSTETVALAQEKHNTLSSSTVALGRTLIANQILAANQKGDSKITVKVIGDSSFGHIISVADTKGHVKGYIQNTGVDIKKTATGEVLVGPFMGNGHFVTIIDYGTGNPYTSTTPLITGEIGEDFAYYLTESEQTPSAIGLNVLLDENDKVKVAGGFMVQVLPGASEEEIARYEKRLQEMPAISHLLASKNHVDALLEAIYGDEPYKRLSEEPLSFQCDCSRERFEAALMTLPKADLQAMIDEDKGAEIVCQFCGTKYQFNESDMEALINDKA</sequence>
<protein>
    <recommendedName>
        <fullName evidence="1">33 kDa chaperonin</fullName>
    </recommendedName>
    <alternativeName>
        <fullName evidence="1">Heat shock protein 33 homolog</fullName>
        <shortName evidence="1">HSP33</shortName>
    </alternativeName>
</protein>
<evidence type="ECO:0000255" key="1">
    <source>
        <dbReference type="HAMAP-Rule" id="MF_00117"/>
    </source>
</evidence>